<dbReference type="EMBL" id="AJ938182">
    <property type="protein sequence ID" value="CAI81799.1"/>
    <property type="molecule type" value="Genomic_DNA"/>
</dbReference>
<dbReference type="RefSeq" id="WP_001080824.1">
    <property type="nucleotide sequence ID" value="NC_007622.1"/>
</dbReference>
<dbReference type="PDB" id="6FXC">
    <property type="method" value="EM"/>
    <property type="resolution" value="6.76 A"/>
    <property type="chains" value="AF/BF=2-176"/>
</dbReference>
<dbReference type="PDBsum" id="6FXC"/>
<dbReference type="EMDB" id="EMD-3637"/>
<dbReference type="SMR" id="Q2YYK9"/>
<dbReference type="KEGG" id="sab:SAB2110c"/>
<dbReference type="HOGENOM" id="CLU_061015_2_1_9"/>
<dbReference type="GO" id="GO:1990904">
    <property type="term" value="C:ribonucleoprotein complex"/>
    <property type="evidence" value="ECO:0007669"/>
    <property type="project" value="UniProtKB-KW"/>
</dbReference>
<dbReference type="GO" id="GO:0005840">
    <property type="term" value="C:ribosome"/>
    <property type="evidence" value="ECO:0007669"/>
    <property type="project" value="UniProtKB-KW"/>
</dbReference>
<dbReference type="GO" id="GO:0019843">
    <property type="term" value="F:rRNA binding"/>
    <property type="evidence" value="ECO:0007669"/>
    <property type="project" value="UniProtKB-UniRule"/>
</dbReference>
<dbReference type="GO" id="GO:0003735">
    <property type="term" value="F:structural constituent of ribosome"/>
    <property type="evidence" value="ECO:0007669"/>
    <property type="project" value="InterPro"/>
</dbReference>
<dbReference type="GO" id="GO:0000049">
    <property type="term" value="F:tRNA binding"/>
    <property type="evidence" value="ECO:0007669"/>
    <property type="project" value="UniProtKB-UniRule"/>
</dbReference>
<dbReference type="GO" id="GO:0006412">
    <property type="term" value="P:translation"/>
    <property type="evidence" value="ECO:0007669"/>
    <property type="project" value="UniProtKB-UniRule"/>
</dbReference>
<dbReference type="FunFam" id="3.30.1440.10:FF:000001">
    <property type="entry name" value="50S ribosomal protein L5"/>
    <property type="match status" value="1"/>
</dbReference>
<dbReference type="Gene3D" id="3.30.1440.10">
    <property type="match status" value="1"/>
</dbReference>
<dbReference type="HAMAP" id="MF_01333_B">
    <property type="entry name" value="Ribosomal_uL5_B"/>
    <property type="match status" value="1"/>
</dbReference>
<dbReference type="InterPro" id="IPR002132">
    <property type="entry name" value="Ribosomal_uL5"/>
</dbReference>
<dbReference type="InterPro" id="IPR020930">
    <property type="entry name" value="Ribosomal_uL5_bac-type"/>
</dbReference>
<dbReference type="InterPro" id="IPR031309">
    <property type="entry name" value="Ribosomal_uL5_C"/>
</dbReference>
<dbReference type="InterPro" id="IPR020929">
    <property type="entry name" value="Ribosomal_uL5_CS"/>
</dbReference>
<dbReference type="InterPro" id="IPR022803">
    <property type="entry name" value="Ribosomal_uL5_dom_sf"/>
</dbReference>
<dbReference type="InterPro" id="IPR031310">
    <property type="entry name" value="Ribosomal_uL5_N"/>
</dbReference>
<dbReference type="NCBIfam" id="NF000585">
    <property type="entry name" value="PRK00010.1"/>
    <property type="match status" value="1"/>
</dbReference>
<dbReference type="PANTHER" id="PTHR11994">
    <property type="entry name" value="60S RIBOSOMAL PROTEIN L11-RELATED"/>
    <property type="match status" value="1"/>
</dbReference>
<dbReference type="Pfam" id="PF00281">
    <property type="entry name" value="Ribosomal_L5"/>
    <property type="match status" value="1"/>
</dbReference>
<dbReference type="Pfam" id="PF00673">
    <property type="entry name" value="Ribosomal_L5_C"/>
    <property type="match status" value="1"/>
</dbReference>
<dbReference type="PIRSF" id="PIRSF002161">
    <property type="entry name" value="Ribosomal_L5"/>
    <property type="match status" value="1"/>
</dbReference>
<dbReference type="SUPFAM" id="SSF55282">
    <property type="entry name" value="RL5-like"/>
    <property type="match status" value="1"/>
</dbReference>
<dbReference type="PROSITE" id="PS00358">
    <property type="entry name" value="RIBOSOMAL_L5"/>
    <property type="match status" value="1"/>
</dbReference>
<reference key="1">
    <citation type="journal article" date="2007" name="PLoS ONE">
        <title>Molecular correlates of host specialization in Staphylococcus aureus.</title>
        <authorList>
            <person name="Herron-Olson L."/>
            <person name="Fitzgerald J.R."/>
            <person name="Musser J.M."/>
            <person name="Kapur V."/>
        </authorList>
    </citation>
    <scope>NUCLEOTIDE SEQUENCE [LARGE SCALE GENOMIC DNA]</scope>
    <source>
        <strain>bovine RF122 / ET3-1</strain>
    </source>
</reference>
<evidence type="ECO:0000255" key="1">
    <source>
        <dbReference type="HAMAP-Rule" id="MF_01333"/>
    </source>
</evidence>
<evidence type="ECO:0000305" key="2"/>
<accession>Q2YYK9</accession>
<keyword id="KW-0002">3D-structure</keyword>
<keyword id="KW-0687">Ribonucleoprotein</keyword>
<keyword id="KW-0689">Ribosomal protein</keyword>
<keyword id="KW-0694">RNA-binding</keyword>
<keyword id="KW-0699">rRNA-binding</keyword>
<keyword id="KW-0820">tRNA-binding</keyword>
<organism>
    <name type="scientific">Staphylococcus aureus (strain bovine RF122 / ET3-1)</name>
    <dbReference type="NCBI Taxonomy" id="273036"/>
    <lineage>
        <taxon>Bacteria</taxon>
        <taxon>Bacillati</taxon>
        <taxon>Bacillota</taxon>
        <taxon>Bacilli</taxon>
        <taxon>Bacillales</taxon>
        <taxon>Staphylococcaceae</taxon>
        <taxon>Staphylococcus</taxon>
    </lineage>
</organism>
<comment type="function">
    <text evidence="1">This is one of the proteins that bind and probably mediate the attachment of the 5S RNA into the large ribosomal subunit, where it forms part of the central protuberance. In the 70S ribosome it contacts protein S13 of the 30S subunit (bridge B1b), connecting the 2 subunits; this bridge is implicated in subunit movement. Contacts the P site tRNA; the 5S rRNA and some of its associated proteins might help stabilize positioning of ribosome-bound tRNAs.</text>
</comment>
<comment type="subunit">
    <text evidence="1">Part of the 50S ribosomal subunit; part of the 5S rRNA/L5/L18/L25 subcomplex. Contacts the 5S rRNA and the P site tRNA. Forms a bridge to the 30S subunit in the 70S ribosome.</text>
</comment>
<comment type="similarity">
    <text evidence="1">Belongs to the universal ribosomal protein uL5 family.</text>
</comment>
<sequence length="179" mass="20267">MNRLKEKFNTEVTENLMKKFNYSSVMEVPKIDKIVVNMGVGDAVQNSKVLDNAVEELELITGQKPLVTKAKKSIATFRLREGMPIGAKVTLRGERMYEFLDKLISVSLPRVRDFQGVSKKAFDGRGNYTLGVKEQLIFPEIDYDKVSKVRGMDIVIVTTANTDEEARELLANFGMPFRK</sequence>
<proteinExistence type="evidence at protein level"/>
<gene>
    <name evidence="1" type="primary">rplE</name>
    <name type="ordered locus">SAB2110c</name>
</gene>
<name>RL5_STAAB</name>
<protein>
    <recommendedName>
        <fullName evidence="1">Large ribosomal subunit protein uL5</fullName>
    </recommendedName>
    <alternativeName>
        <fullName evidence="2">50S ribosomal protein L5</fullName>
    </alternativeName>
</protein>
<feature type="chain" id="PRO_0000243067" description="Large ribosomal subunit protein uL5">
    <location>
        <begin position="1"/>
        <end position="179"/>
    </location>
</feature>